<dbReference type="EC" id="2.4.1.-" evidence="3"/>
<dbReference type="EMBL" id="OR426399">
    <property type="protein sequence ID" value="WWM48152.1"/>
    <property type="molecule type" value="mRNA"/>
</dbReference>
<dbReference type="EMBL" id="JBDFQZ010000003">
    <property type="protein sequence ID" value="KAK9740266.1"/>
    <property type="molecule type" value="Genomic_DNA"/>
</dbReference>
<dbReference type="UniPathway" id="UPA00213"/>
<dbReference type="Proteomes" id="UP001443914">
    <property type="component" value="Unassembled WGS sequence"/>
</dbReference>
<dbReference type="GO" id="GO:0080043">
    <property type="term" value="F:quercetin 3-O-glucosyltransferase activity"/>
    <property type="evidence" value="ECO:0007669"/>
    <property type="project" value="TreeGrafter"/>
</dbReference>
<dbReference type="GO" id="GO:0080044">
    <property type="term" value="F:quercetin 7-O-glucosyltransferase activity"/>
    <property type="evidence" value="ECO:0007669"/>
    <property type="project" value="TreeGrafter"/>
</dbReference>
<dbReference type="GO" id="GO:0008194">
    <property type="term" value="F:UDP-glycosyltransferase activity"/>
    <property type="evidence" value="ECO:0000314"/>
    <property type="project" value="UniProtKB"/>
</dbReference>
<dbReference type="GO" id="GO:0070085">
    <property type="term" value="P:glycosylation"/>
    <property type="evidence" value="ECO:0000314"/>
    <property type="project" value="UniProtKB"/>
</dbReference>
<dbReference type="GO" id="GO:0016135">
    <property type="term" value="P:saponin biosynthetic process"/>
    <property type="evidence" value="ECO:0000314"/>
    <property type="project" value="UniProtKB"/>
</dbReference>
<dbReference type="GO" id="GO:0016104">
    <property type="term" value="P:triterpenoid biosynthetic process"/>
    <property type="evidence" value="ECO:0000314"/>
    <property type="project" value="UniProtKB"/>
</dbReference>
<dbReference type="CDD" id="cd03784">
    <property type="entry name" value="GT1_Gtf-like"/>
    <property type="match status" value="1"/>
</dbReference>
<dbReference type="FunFam" id="3.40.50.2000:FF:000019">
    <property type="entry name" value="Glycosyltransferase"/>
    <property type="match status" value="1"/>
</dbReference>
<dbReference type="Gene3D" id="3.40.50.2000">
    <property type="entry name" value="Glycogen Phosphorylase B"/>
    <property type="match status" value="2"/>
</dbReference>
<dbReference type="InterPro" id="IPR002213">
    <property type="entry name" value="UDP_glucos_trans"/>
</dbReference>
<dbReference type="InterPro" id="IPR035595">
    <property type="entry name" value="UDP_glycos_trans_CS"/>
</dbReference>
<dbReference type="PANTHER" id="PTHR11926">
    <property type="entry name" value="GLUCOSYL/GLUCURONOSYL TRANSFERASES"/>
    <property type="match status" value="1"/>
</dbReference>
<dbReference type="PANTHER" id="PTHR11926:SF1553">
    <property type="entry name" value="GLYCOSYLTRANSFERASE"/>
    <property type="match status" value="1"/>
</dbReference>
<dbReference type="Pfam" id="PF00201">
    <property type="entry name" value="UDPGT"/>
    <property type="match status" value="1"/>
</dbReference>
<dbReference type="SUPFAM" id="SSF53756">
    <property type="entry name" value="UDP-Glycosyltransferase/glycogen phosphorylase"/>
    <property type="match status" value="1"/>
</dbReference>
<dbReference type="PROSITE" id="PS00375">
    <property type="entry name" value="UDPGT"/>
    <property type="match status" value="1"/>
</dbReference>
<organism>
    <name type="scientific">Saponaria officinalis</name>
    <name type="common">Common soapwort</name>
    <name type="synonym">Lychnis saponaria</name>
    <dbReference type="NCBI Taxonomy" id="3572"/>
    <lineage>
        <taxon>Eukaryota</taxon>
        <taxon>Viridiplantae</taxon>
        <taxon>Streptophyta</taxon>
        <taxon>Embryophyta</taxon>
        <taxon>Tracheophyta</taxon>
        <taxon>Spermatophyta</taxon>
        <taxon>Magnoliopsida</taxon>
        <taxon>eudicotyledons</taxon>
        <taxon>Gunneridae</taxon>
        <taxon>Pentapetalae</taxon>
        <taxon>Caryophyllales</taxon>
        <taxon>Caryophyllaceae</taxon>
        <taxon>Caryophylleae</taxon>
        <taxon>Saponaria</taxon>
    </lineage>
</organism>
<sequence>MSDQNDKKVEIIVFPYHGQGHMNTMLQFAKRIAWKNAKVTIATTLSTTNKMKSKVENAWGTSITLDSIYDDSDESQIKFMDRMARFEAAAASSLSKLLVQKKEEADNKVLLVYDGNLPWALDIAHEHGVRGAAFFPQSCATVATYYSLYQETQGKELETELPAVFPPLELIQRNVPNVFGLKFPEAVVAKNGKEYSPFVLFVLRQCINLEKADLLLFNQFDKLVEPGEVLQWMSKIFNVKTIGPTLPSSYIDKRIKDDVDYGFHAFNLDNNSCINWLNSKPARSVIYIAFGSSVHYSVEQMTEIAEALKSQPNNFLWAVRETEQKKLPEDFVQQTSEKGLMLSWCPQLDVLVHESISCFVTHCGWNSITEALSFGVPMLSVPQFLDQPVDAHFVEQVWGAGITVKRSEDGLVTRDEIVRCLEVLNNGEKAEEIKANVARWKVLAKEALDEGGSSDKHIDEIIEWVSSF</sequence>
<proteinExistence type="evidence at protein level"/>
<gene>
    <name evidence="4" type="primary">UGT74CD1</name>
    <name evidence="4" type="synonym">Saoffv11011728m</name>
    <name evidence="6" type="ORF">RND81_03G023500</name>
</gene>
<comment type="function">
    <text evidence="3">Component of the oleanane-type triterpene saponins (e.g. saponarioside A and saponarioside B) biosynthetic pathway, leading to the production of natural products with detergent properties used as traditional sources of soap (PubMed:39043959). A glycosyltransferase that, together with SDR1, mediates the conversion of QA-tri to QA-triF; UGT74CD1 may transfer 4-keto-6-deoxy-glucose to QA-tri, which is in turn reduced to D-fucose by SDR1, thus leading to QA-triF formation via the initiation of the C-28 sugar chain (PubMed:39043959).</text>
</comment>
<comment type="pathway">
    <text evidence="3">Secondary metabolite biosynthesis; terpenoid biosynthesis.</text>
</comment>
<comment type="tissue specificity">
    <text evidence="3">Mainly expressed in flowers, flower buds and young leaves, and, to a lesser extent, in old leaves, stems and roots.</text>
</comment>
<comment type="biotechnology">
    <text evidence="4">Soapwort saponins possess anticancer properties and are also being explored as enhancers for endosomal escape in targeted tumor therapies (PubMed:39043959). They may also serve as precursors for vaccine adjuvants (PubMed:39043959).</text>
</comment>
<comment type="similarity">
    <text evidence="5">Belongs to the UDP-glycosyltransferase family.</text>
</comment>
<keyword id="KW-0328">Glycosyltransferase</keyword>
<keyword id="KW-0808">Transferase</keyword>
<reference evidence="7" key="1">
    <citation type="journal article" date="2025" name="Nat. Chem. Biol.">
        <title>Unlocking saponin biosynthesis in soapwort.</title>
        <authorList>
            <person name="Jo S."/>
            <person name="El-Demerdash A."/>
            <person name="Owen C."/>
            <person name="Srivastava V."/>
            <person name="Wu D."/>
            <person name="Kikuchi S."/>
            <person name="Reed J."/>
            <person name="Hodgson H."/>
            <person name="Harkess A."/>
            <person name="Shu S."/>
            <person name="Plott C."/>
            <person name="Jenkins J."/>
            <person name="Williams M."/>
            <person name="Boston L.-B."/>
            <person name="Lacchini E."/>
            <person name="Qu T."/>
            <person name="Goossens A."/>
            <person name="Grimwood J."/>
            <person name="Schmutz J."/>
            <person name="Leebens-Mack J."/>
            <person name="Osbourn A."/>
        </authorList>
    </citation>
    <scope>NUCLEOTIDE SEQUENCE [MRNA]</scope>
    <scope>FUNCTION</scope>
    <scope>CATALYTIC ACTIVITY</scope>
    <scope>TISSUE SPECIFICITY</scope>
    <scope>PATHWAY</scope>
    <scope>BIOTECHNOLOGY</scope>
</reference>
<reference evidence="6" key="2">
    <citation type="submission" date="2024-03" db="EMBL/GenBank/DDBJ databases">
        <title>WGS assembly of Saponaria officinalis var. Norfolk2.</title>
        <authorList>
            <person name="Jenkins J."/>
            <person name="Shu S."/>
            <person name="Grimwood J."/>
            <person name="Barry K."/>
            <person name="Goodstein D."/>
            <person name="Schmutz J."/>
            <person name="Leebens-Mack J."/>
            <person name="Osbourn A."/>
        </authorList>
    </citation>
    <scope>NUCLEOTIDE SEQUENCE [LARGE SCALE GENOMIC DNA]</scope>
    <source>
        <strain>cv. Norfolk2</strain>
        <tissue>Leaf</tissue>
    </source>
</reference>
<evidence type="ECO:0000250" key="1">
    <source>
        <dbReference type="UniProtKB" id="A0A0A1HA03"/>
    </source>
</evidence>
<evidence type="ECO:0000250" key="2">
    <source>
        <dbReference type="UniProtKB" id="Q9M156"/>
    </source>
</evidence>
<evidence type="ECO:0000269" key="3">
    <source>
    </source>
</evidence>
<evidence type="ECO:0000303" key="4">
    <source>
    </source>
</evidence>
<evidence type="ECO:0000305" key="5"/>
<evidence type="ECO:0000312" key="6">
    <source>
        <dbReference type="EMBL" id="KAK9740266.1"/>
    </source>
</evidence>
<evidence type="ECO:0000312" key="7">
    <source>
        <dbReference type="EMBL" id="WWM48152.1"/>
    </source>
</evidence>
<protein>
    <recommendedName>
        <fullName evidence="4">UDP-glucosyl transferase 74CD1</fullName>
        <shortName evidence="4">SoUGT74CD1</shortName>
        <ecNumber evidence="3">2.4.1.-</ecNumber>
    </recommendedName>
</protein>
<feature type="chain" id="PRO_0000462360" description="UDP-glucosyl transferase 74CD1">
    <location>
        <begin position="1"/>
        <end position="468"/>
    </location>
</feature>
<feature type="active site" description="Proton acceptor" evidence="1">
    <location>
        <position position="21"/>
    </location>
</feature>
<feature type="active site" description="Charge relay" evidence="1">
    <location>
        <position position="114"/>
    </location>
</feature>
<feature type="binding site" evidence="1">
    <location>
        <position position="20"/>
    </location>
    <ligand>
        <name>UDP-alpha-D-glucose</name>
        <dbReference type="ChEBI" id="CHEBI:58885"/>
    </ligand>
</feature>
<feature type="binding site" evidence="2">
    <location>
        <position position="292"/>
    </location>
    <ligand>
        <name>UDP-alpha-D-glucose</name>
        <dbReference type="ChEBI" id="CHEBI:58885"/>
    </ligand>
</feature>
<feature type="binding site" evidence="2">
    <location>
        <position position="344"/>
    </location>
    <ligand>
        <name>UDP-alpha-D-glucose</name>
        <dbReference type="ChEBI" id="CHEBI:58885"/>
    </ligand>
</feature>
<feature type="binding site" evidence="1">
    <location>
        <position position="347"/>
    </location>
    <ligand>
        <name>UDP-alpha-D-glucose</name>
        <dbReference type="ChEBI" id="CHEBI:58885"/>
    </ligand>
</feature>
<feature type="binding site" evidence="1">
    <location>
        <position position="362"/>
    </location>
    <ligand>
        <name>UDP-alpha-D-glucose</name>
        <dbReference type="ChEBI" id="CHEBI:58885"/>
    </ligand>
</feature>
<feature type="binding site" evidence="1">
    <location>
        <position position="365"/>
    </location>
    <ligand>
        <name>UDP-alpha-D-glucose</name>
        <dbReference type="ChEBI" id="CHEBI:58885"/>
    </ligand>
</feature>
<feature type="binding site" evidence="1">
    <location>
        <position position="366"/>
    </location>
    <ligand>
        <name>UDP-alpha-D-glucose</name>
        <dbReference type="ChEBI" id="CHEBI:58885"/>
    </ligand>
</feature>
<feature type="binding site" evidence="1">
    <location>
        <position position="367"/>
    </location>
    <ligand>
        <name>UDP-alpha-D-glucose</name>
        <dbReference type="ChEBI" id="CHEBI:58885"/>
    </ligand>
</feature>
<feature type="binding site" evidence="1">
    <location>
        <position position="370"/>
    </location>
    <ligand>
        <name>UDP-alpha-D-glucose</name>
        <dbReference type="ChEBI" id="CHEBI:58885"/>
    </ligand>
</feature>
<feature type="binding site" evidence="1">
    <location>
        <position position="386"/>
    </location>
    <ligand>
        <name>UDP-alpha-D-glucose</name>
        <dbReference type="ChEBI" id="CHEBI:58885"/>
    </ligand>
</feature>
<feature type="binding site" evidence="1">
    <location>
        <position position="387"/>
    </location>
    <ligand>
        <name>UDP-alpha-D-glucose</name>
        <dbReference type="ChEBI" id="CHEBI:58885"/>
    </ligand>
</feature>
<name>GT741_SAPOF</name>
<accession>A0AAW1M2U7</accession>